<evidence type="ECO:0000255" key="1">
    <source>
        <dbReference type="HAMAP-Rule" id="MF_00181"/>
    </source>
</evidence>
<sequence>MSAKFEISFSKSVKLNGGLAILLKTAEADSAAGAETADPAGVIAKAAKIARFSAKSMATLDIVAPEGAPVERIVVVGIGKVGELTAHDWLKAGGAAASKVKNTDKVAIFIDVPGLETDARAAADFALGMLLRAYSFDAYKTKKNDDEEKSAKSVKVTIVTADATGARKAFSESEAIAGGVNLARDLVNEPPNALGPVEFAARAKELENLGVEVEILTEKEMRRLGMGALLGVAQGSVRPPRLAVMQWKGGKAKDRPVAFVGKGVVFDTGGISIKPAAGMEDMKGDMGGAAAVTGLMHVLAARKAAVNAVGIIGLVENMPDGNAQRPGDIVTSMSGQTIEVINTDAEGRLVLCDALWYCSDRFKPQFMINLATLTGAIVVALGNVHAGLFSNDDQLSAQLTAAGLSTNEKLWRMPLGKDYDKLIDSKFADMKNTGGRQAGSITAAHFLKRFVQDTPWAHLDIAGTAMGSPQDEINQSWGSGFGVRLLDELVRANCESR</sequence>
<comment type="function">
    <text evidence="1">Presumably involved in the processing and regular turnover of intracellular proteins. Catalyzes the removal of unsubstituted N-terminal amino acids from various peptides.</text>
</comment>
<comment type="catalytic activity">
    <reaction evidence="1">
        <text>Release of an N-terminal amino acid, Xaa-|-Yaa-, in which Xaa is preferably Leu, but may be other amino acids including Pro although not Arg or Lys, and Yaa may be Pro. Amino acid amides and methyl esters are also readily hydrolyzed, but rates on arylamides are exceedingly low.</text>
        <dbReference type="EC" id="3.4.11.1"/>
    </reaction>
</comment>
<comment type="catalytic activity">
    <reaction evidence="1">
        <text>Release of an N-terminal amino acid, preferentially leucine, but not glutamic or aspartic acids.</text>
        <dbReference type="EC" id="3.4.11.10"/>
    </reaction>
</comment>
<comment type="cofactor">
    <cofactor evidence="1">
        <name>Mn(2+)</name>
        <dbReference type="ChEBI" id="CHEBI:29035"/>
    </cofactor>
    <text evidence="1">Binds 2 manganese ions per subunit.</text>
</comment>
<comment type="subcellular location">
    <subcellularLocation>
        <location evidence="1">Cytoplasm</location>
    </subcellularLocation>
</comment>
<comment type="similarity">
    <text evidence="1">Belongs to the peptidase M17 family.</text>
</comment>
<name>AMPA_RHIEC</name>
<keyword id="KW-0031">Aminopeptidase</keyword>
<keyword id="KW-0963">Cytoplasm</keyword>
<keyword id="KW-0378">Hydrolase</keyword>
<keyword id="KW-0464">Manganese</keyword>
<keyword id="KW-0479">Metal-binding</keyword>
<keyword id="KW-0645">Protease</keyword>
<keyword id="KW-1185">Reference proteome</keyword>
<organism>
    <name type="scientific">Rhizobium etli (strain ATCC 51251 / DSM 11541 / JCM 21823 / NBRC 15573 / CFN 42)</name>
    <dbReference type="NCBI Taxonomy" id="347834"/>
    <lineage>
        <taxon>Bacteria</taxon>
        <taxon>Pseudomonadati</taxon>
        <taxon>Pseudomonadota</taxon>
        <taxon>Alphaproteobacteria</taxon>
        <taxon>Hyphomicrobiales</taxon>
        <taxon>Rhizobiaceae</taxon>
        <taxon>Rhizobium/Agrobacterium group</taxon>
        <taxon>Rhizobium</taxon>
    </lineage>
</organism>
<dbReference type="EC" id="3.4.11.1" evidence="1"/>
<dbReference type="EC" id="3.4.11.10" evidence="1"/>
<dbReference type="EMBL" id="CP000133">
    <property type="protein sequence ID" value="ABC90259.1"/>
    <property type="molecule type" value="Genomic_DNA"/>
</dbReference>
<dbReference type="RefSeq" id="WP_011424789.1">
    <property type="nucleotide sequence ID" value="NC_007761.1"/>
</dbReference>
<dbReference type="SMR" id="Q2KA77"/>
<dbReference type="KEGG" id="ret:RHE_CH01456"/>
<dbReference type="eggNOG" id="COG0260">
    <property type="taxonomic scope" value="Bacteria"/>
</dbReference>
<dbReference type="HOGENOM" id="CLU_013734_6_0_5"/>
<dbReference type="OrthoDB" id="9809354at2"/>
<dbReference type="Proteomes" id="UP000001936">
    <property type="component" value="Chromosome"/>
</dbReference>
<dbReference type="GO" id="GO:0005737">
    <property type="term" value="C:cytoplasm"/>
    <property type="evidence" value="ECO:0007669"/>
    <property type="project" value="UniProtKB-SubCell"/>
</dbReference>
<dbReference type="GO" id="GO:0030145">
    <property type="term" value="F:manganese ion binding"/>
    <property type="evidence" value="ECO:0007669"/>
    <property type="project" value="UniProtKB-UniRule"/>
</dbReference>
<dbReference type="GO" id="GO:0070006">
    <property type="term" value="F:metalloaminopeptidase activity"/>
    <property type="evidence" value="ECO:0007669"/>
    <property type="project" value="InterPro"/>
</dbReference>
<dbReference type="GO" id="GO:0006508">
    <property type="term" value="P:proteolysis"/>
    <property type="evidence" value="ECO:0007669"/>
    <property type="project" value="UniProtKB-KW"/>
</dbReference>
<dbReference type="CDD" id="cd00433">
    <property type="entry name" value="Peptidase_M17"/>
    <property type="match status" value="1"/>
</dbReference>
<dbReference type="Gene3D" id="3.40.220.10">
    <property type="entry name" value="Leucine Aminopeptidase, subunit E, domain 1"/>
    <property type="match status" value="1"/>
</dbReference>
<dbReference type="Gene3D" id="3.40.630.10">
    <property type="entry name" value="Zn peptidases"/>
    <property type="match status" value="1"/>
</dbReference>
<dbReference type="HAMAP" id="MF_00181">
    <property type="entry name" value="Cytosol_peptidase_M17"/>
    <property type="match status" value="1"/>
</dbReference>
<dbReference type="InterPro" id="IPR011356">
    <property type="entry name" value="Leucine_aapep/pepB"/>
</dbReference>
<dbReference type="InterPro" id="IPR043472">
    <property type="entry name" value="Macro_dom-like"/>
</dbReference>
<dbReference type="InterPro" id="IPR000819">
    <property type="entry name" value="Peptidase_M17_C"/>
</dbReference>
<dbReference type="InterPro" id="IPR023042">
    <property type="entry name" value="Peptidase_M17_leu_NH2_pept"/>
</dbReference>
<dbReference type="InterPro" id="IPR008283">
    <property type="entry name" value="Peptidase_M17_N"/>
</dbReference>
<dbReference type="NCBIfam" id="NF002073">
    <property type="entry name" value="PRK00913.1-2"/>
    <property type="match status" value="1"/>
</dbReference>
<dbReference type="NCBIfam" id="NF002074">
    <property type="entry name" value="PRK00913.1-4"/>
    <property type="match status" value="1"/>
</dbReference>
<dbReference type="NCBIfam" id="NF002075">
    <property type="entry name" value="PRK00913.2-2"/>
    <property type="match status" value="1"/>
</dbReference>
<dbReference type="NCBIfam" id="NF002077">
    <property type="entry name" value="PRK00913.2-4"/>
    <property type="match status" value="1"/>
</dbReference>
<dbReference type="NCBIfam" id="NF002083">
    <property type="entry name" value="PRK00913.3-5"/>
    <property type="match status" value="1"/>
</dbReference>
<dbReference type="PANTHER" id="PTHR11963:SF23">
    <property type="entry name" value="CYTOSOL AMINOPEPTIDASE"/>
    <property type="match status" value="1"/>
</dbReference>
<dbReference type="PANTHER" id="PTHR11963">
    <property type="entry name" value="LEUCINE AMINOPEPTIDASE-RELATED"/>
    <property type="match status" value="1"/>
</dbReference>
<dbReference type="Pfam" id="PF00883">
    <property type="entry name" value="Peptidase_M17"/>
    <property type="match status" value="1"/>
</dbReference>
<dbReference type="Pfam" id="PF02789">
    <property type="entry name" value="Peptidase_M17_N"/>
    <property type="match status" value="1"/>
</dbReference>
<dbReference type="PRINTS" id="PR00481">
    <property type="entry name" value="LAMNOPPTDASE"/>
</dbReference>
<dbReference type="SUPFAM" id="SSF52949">
    <property type="entry name" value="Macro domain-like"/>
    <property type="match status" value="1"/>
</dbReference>
<dbReference type="SUPFAM" id="SSF53187">
    <property type="entry name" value="Zn-dependent exopeptidases"/>
    <property type="match status" value="1"/>
</dbReference>
<dbReference type="PROSITE" id="PS00631">
    <property type="entry name" value="CYTOSOL_AP"/>
    <property type="match status" value="1"/>
</dbReference>
<protein>
    <recommendedName>
        <fullName evidence="1">Probable cytosol aminopeptidase</fullName>
        <ecNumber evidence="1">3.4.11.1</ecNumber>
    </recommendedName>
    <alternativeName>
        <fullName evidence="1">Leucine aminopeptidase</fullName>
        <shortName evidence="1">LAP</shortName>
        <ecNumber evidence="1">3.4.11.10</ecNumber>
    </alternativeName>
    <alternativeName>
        <fullName evidence="1">Leucyl aminopeptidase</fullName>
    </alternativeName>
</protein>
<proteinExistence type="inferred from homology"/>
<gene>
    <name evidence="1" type="primary">pepA</name>
    <name type="ordered locus">RHE_CH01456</name>
</gene>
<reference key="1">
    <citation type="journal article" date="2006" name="Proc. Natl. Acad. Sci. U.S.A.">
        <title>The partitioned Rhizobium etli genome: genetic and metabolic redundancy in seven interacting replicons.</title>
        <authorList>
            <person name="Gonzalez V."/>
            <person name="Santamaria R.I."/>
            <person name="Bustos P."/>
            <person name="Hernandez-Gonzalez I."/>
            <person name="Medrano-Soto A."/>
            <person name="Moreno-Hagelsieb G."/>
            <person name="Janga S.C."/>
            <person name="Ramirez M.A."/>
            <person name="Jimenez-Jacinto V."/>
            <person name="Collado-Vides J."/>
            <person name="Davila G."/>
        </authorList>
    </citation>
    <scope>NUCLEOTIDE SEQUENCE [LARGE SCALE GENOMIC DNA]</scope>
    <source>
        <strain>ATCC 51251 / DSM 11541 / JCM 21823 / NBRC 15573 / CFN 42</strain>
    </source>
</reference>
<feature type="chain" id="PRO_1000019965" description="Probable cytosol aminopeptidase">
    <location>
        <begin position="1"/>
        <end position="497"/>
    </location>
</feature>
<feature type="active site" evidence="1">
    <location>
        <position position="274"/>
    </location>
</feature>
<feature type="active site" evidence="1">
    <location>
        <position position="348"/>
    </location>
</feature>
<feature type="binding site" evidence="1">
    <location>
        <position position="262"/>
    </location>
    <ligand>
        <name>Mn(2+)</name>
        <dbReference type="ChEBI" id="CHEBI:29035"/>
        <label>2</label>
    </ligand>
</feature>
<feature type="binding site" evidence="1">
    <location>
        <position position="267"/>
    </location>
    <ligand>
        <name>Mn(2+)</name>
        <dbReference type="ChEBI" id="CHEBI:29035"/>
        <label>1</label>
    </ligand>
</feature>
<feature type="binding site" evidence="1">
    <location>
        <position position="267"/>
    </location>
    <ligand>
        <name>Mn(2+)</name>
        <dbReference type="ChEBI" id="CHEBI:29035"/>
        <label>2</label>
    </ligand>
</feature>
<feature type="binding site" evidence="1">
    <location>
        <position position="285"/>
    </location>
    <ligand>
        <name>Mn(2+)</name>
        <dbReference type="ChEBI" id="CHEBI:29035"/>
        <label>2</label>
    </ligand>
</feature>
<feature type="binding site" evidence="1">
    <location>
        <position position="344"/>
    </location>
    <ligand>
        <name>Mn(2+)</name>
        <dbReference type="ChEBI" id="CHEBI:29035"/>
        <label>1</label>
    </ligand>
</feature>
<feature type="binding site" evidence="1">
    <location>
        <position position="346"/>
    </location>
    <ligand>
        <name>Mn(2+)</name>
        <dbReference type="ChEBI" id="CHEBI:29035"/>
        <label>1</label>
    </ligand>
</feature>
<feature type="binding site" evidence="1">
    <location>
        <position position="346"/>
    </location>
    <ligand>
        <name>Mn(2+)</name>
        <dbReference type="ChEBI" id="CHEBI:29035"/>
        <label>2</label>
    </ligand>
</feature>
<accession>Q2KA77</accession>